<accession>B8F3F6</accession>
<dbReference type="EMBL" id="CP001321">
    <property type="protein sequence ID" value="ACL31858.1"/>
    <property type="molecule type" value="Genomic_DNA"/>
</dbReference>
<dbReference type="RefSeq" id="WP_012621589.1">
    <property type="nucleotide sequence ID" value="NC_011852.1"/>
</dbReference>
<dbReference type="SMR" id="B8F3F6"/>
<dbReference type="STRING" id="557723.HAPS_0162"/>
<dbReference type="KEGG" id="hap:HAPS_0162"/>
<dbReference type="PATRIC" id="fig|557723.8.peg.171"/>
<dbReference type="HOGENOM" id="CLU_082184_2_2_6"/>
<dbReference type="Proteomes" id="UP000006743">
    <property type="component" value="Chromosome"/>
</dbReference>
<dbReference type="GO" id="GO:0022625">
    <property type="term" value="C:cytosolic large ribosomal subunit"/>
    <property type="evidence" value="ECO:0007669"/>
    <property type="project" value="TreeGrafter"/>
</dbReference>
<dbReference type="GO" id="GO:0003729">
    <property type="term" value="F:mRNA binding"/>
    <property type="evidence" value="ECO:0007669"/>
    <property type="project" value="TreeGrafter"/>
</dbReference>
<dbReference type="GO" id="GO:0003735">
    <property type="term" value="F:structural constituent of ribosome"/>
    <property type="evidence" value="ECO:0007669"/>
    <property type="project" value="InterPro"/>
</dbReference>
<dbReference type="GO" id="GO:0017148">
    <property type="term" value="P:negative regulation of translation"/>
    <property type="evidence" value="ECO:0007669"/>
    <property type="project" value="TreeGrafter"/>
</dbReference>
<dbReference type="GO" id="GO:0006412">
    <property type="term" value="P:translation"/>
    <property type="evidence" value="ECO:0007669"/>
    <property type="project" value="UniProtKB-UniRule"/>
</dbReference>
<dbReference type="CDD" id="cd00392">
    <property type="entry name" value="Ribosomal_L13"/>
    <property type="match status" value="1"/>
</dbReference>
<dbReference type="FunFam" id="3.90.1180.10:FF:000001">
    <property type="entry name" value="50S ribosomal protein L13"/>
    <property type="match status" value="1"/>
</dbReference>
<dbReference type="Gene3D" id="3.90.1180.10">
    <property type="entry name" value="Ribosomal protein L13"/>
    <property type="match status" value="1"/>
</dbReference>
<dbReference type="HAMAP" id="MF_01366">
    <property type="entry name" value="Ribosomal_uL13"/>
    <property type="match status" value="1"/>
</dbReference>
<dbReference type="InterPro" id="IPR005822">
    <property type="entry name" value="Ribosomal_uL13"/>
</dbReference>
<dbReference type="InterPro" id="IPR005823">
    <property type="entry name" value="Ribosomal_uL13_bac-type"/>
</dbReference>
<dbReference type="InterPro" id="IPR023563">
    <property type="entry name" value="Ribosomal_uL13_CS"/>
</dbReference>
<dbReference type="InterPro" id="IPR036899">
    <property type="entry name" value="Ribosomal_uL13_sf"/>
</dbReference>
<dbReference type="NCBIfam" id="TIGR01066">
    <property type="entry name" value="rplM_bact"/>
    <property type="match status" value="1"/>
</dbReference>
<dbReference type="PANTHER" id="PTHR11545:SF2">
    <property type="entry name" value="LARGE RIBOSOMAL SUBUNIT PROTEIN UL13M"/>
    <property type="match status" value="1"/>
</dbReference>
<dbReference type="PANTHER" id="PTHR11545">
    <property type="entry name" value="RIBOSOMAL PROTEIN L13"/>
    <property type="match status" value="1"/>
</dbReference>
<dbReference type="Pfam" id="PF00572">
    <property type="entry name" value="Ribosomal_L13"/>
    <property type="match status" value="1"/>
</dbReference>
<dbReference type="PIRSF" id="PIRSF002181">
    <property type="entry name" value="Ribosomal_L13"/>
    <property type="match status" value="1"/>
</dbReference>
<dbReference type="SUPFAM" id="SSF52161">
    <property type="entry name" value="Ribosomal protein L13"/>
    <property type="match status" value="1"/>
</dbReference>
<dbReference type="PROSITE" id="PS00783">
    <property type="entry name" value="RIBOSOMAL_L13"/>
    <property type="match status" value="1"/>
</dbReference>
<evidence type="ECO:0000255" key="1">
    <source>
        <dbReference type="HAMAP-Rule" id="MF_01366"/>
    </source>
</evidence>
<evidence type="ECO:0000305" key="2"/>
<keyword id="KW-1185">Reference proteome</keyword>
<keyword id="KW-0687">Ribonucleoprotein</keyword>
<keyword id="KW-0689">Ribosomal protein</keyword>
<proteinExistence type="inferred from homology"/>
<feature type="chain" id="PRO_1000166870" description="Large ribosomal subunit protein uL13">
    <location>
        <begin position="1"/>
        <end position="142"/>
    </location>
</feature>
<comment type="function">
    <text evidence="1">This protein is one of the early assembly proteins of the 50S ribosomal subunit, although it is not seen to bind rRNA by itself. It is important during the early stages of 50S assembly.</text>
</comment>
<comment type="subunit">
    <text evidence="1">Part of the 50S ribosomal subunit.</text>
</comment>
<comment type="similarity">
    <text evidence="1">Belongs to the universal ribosomal protein uL13 family.</text>
</comment>
<protein>
    <recommendedName>
        <fullName evidence="1">Large ribosomal subunit protein uL13</fullName>
    </recommendedName>
    <alternativeName>
        <fullName evidence="2">50S ribosomal protein L13</fullName>
    </alternativeName>
</protein>
<organism>
    <name type="scientific">Glaesserella parasuis serovar 5 (strain SH0165)</name>
    <name type="common">Haemophilus parasuis</name>
    <dbReference type="NCBI Taxonomy" id="557723"/>
    <lineage>
        <taxon>Bacteria</taxon>
        <taxon>Pseudomonadati</taxon>
        <taxon>Pseudomonadota</taxon>
        <taxon>Gammaproteobacteria</taxon>
        <taxon>Pasteurellales</taxon>
        <taxon>Pasteurellaceae</taxon>
        <taxon>Glaesserella</taxon>
    </lineage>
</organism>
<gene>
    <name evidence="1" type="primary">rplM</name>
    <name type="ordered locus">HAPS_0162</name>
</gene>
<name>RL13_GLAP5</name>
<sequence>MKTFVAKPETVKRDWYVVDATGKTLGRLATELARRLRGKHKAEYTPHVDTGDYIIVINAEKVAVTGKKETDKIYYWHTGYVGGIKDATFKEMIARRPEAVIEIAVKGMLPKGPLGRAMFRKLKVYAGNEHNHAAQQPQVLDI</sequence>
<reference key="1">
    <citation type="journal article" date="2009" name="J. Bacteriol.">
        <title>Complete genome sequence of Haemophilus parasuis SH0165.</title>
        <authorList>
            <person name="Yue M."/>
            <person name="Yang F."/>
            <person name="Yang J."/>
            <person name="Bei W."/>
            <person name="Cai X."/>
            <person name="Chen L."/>
            <person name="Dong J."/>
            <person name="Zhou R."/>
            <person name="Jin M."/>
            <person name="Jin Q."/>
            <person name="Chen H."/>
        </authorList>
    </citation>
    <scope>NUCLEOTIDE SEQUENCE [LARGE SCALE GENOMIC DNA]</scope>
    <source>
        <strain>SH0165</strain>
    </source>
</reference>